<reference key="1">
    <citation type="journal article" date="2007" name="Appl. Environ. Microbiol.">
        <title>Genome sequence of the cellulolytic gliding bacterium Cytophaga hutchinsonii.</title>
        <authorList>
            <person name="Xie G."/>
            <person name="Bruce D.C."/>
            <person name="Challacombe J.F."/>
            <person name="Chertkov O."/>
            <person name="Detter J.C."/>
            <person name="Gilna P."/>
            <person name="Han C.S."/>
            <person name="Lucas S."/>
            <person name="Misra M."/>
            <person name="Myers G.L."/>
            <person name="Richardson P."/>
            <person name="Tapia R."/>
            <person name="Thayer N."/>
            <person name="Thompson L.S."/>
            <person name="Brettin T.S."/>
            <person name="Henrissat B."/>
            <person name="Wilson D.B."/>
            <person name="McBride M.J."/>
        </authorList>
    </citation>
    <scope>NUCLEOTIDE SEQUENCE [LARGE SCALE GENOMIC DNA]</scope>
    <source>
        <strain>ATCC 33406 / DSM 1761 / JCM 20678 / CIP 103989 / IAM 12607 / NBRC 15051 / NCIMB 9469 / D465</strain>
    </source>
</reference>
<evidence type="ECO:0000255" key="1">
    <source>
        <dbReference type="HAMAP-Rule" id="MF_00260"/>
    </source>
</evidence>
<keyword id="KW-0627">Porphyrin biosynthesis</keyword>
<keyword id="KW-1185">Reference proteome</keyword>
<keyword id="KW-0808">Transferase</keyword>
<proteinExistence type="inferred from homology"/>
<dbReference type="EC" id="2.5.1.61" evidence="1"/>
<dbReference type="EMBL" id="CP000383">
    <property type="protein sequence ID" value="ABG57781.1"/>
    <property type="molecule type" value="Genomic_DNA"/>
</dbReference>
<dbReference type="RefSeq" id="WP_011583897.1">
    <property type="nucleotide sequence ID" value="NC_008255.1"/>
</dbReference>
<dbReference type="SMR" id="Q11XT5"/>
<dbReference type="STRING" id="269798.CHU_0492"/>
<dbReference type="KEGG" id="chu:CHU_0492"/>
<dbReference type="eggNOG" id="COG0181">
    <property type="taxonomic scope" value="Bacteria"/>
</dbReference>
<dbReference type="HOGENOM" id="CLU_019704_0_2_10"/>
<dbReference type="OrthoDB" id="9810298at2"/>
<dbReference type="UniPathway" id="UPA00251">
    <property type="reaction ID" value="UER00319"/>
</dbReference>
<dbReference type="Proteomes" id="UP000001822">
    <property type="component" value="Chromosome"/>
</dbReference>
<dbReference type="GO" id="GO:0005737">
    <property type="term" value="C:cytoplasm"/>
    <property type="evidence" value="ECO:0007669"/>
    <property type="project" value="TreeGrafter"/>
</dbReference>
<dbReference type="GO" id="GO:0004418">
    <property type="term" value="F:hydroxymethylbilane synthase activity"/>
    <property type="evidence" value="ECO:0007669"/>
    <property type="project" value="UniProtKB-UniRule"/>
</dbReference>
<dbReference type="GO" id="GO:0006782">
    <property type="term" value="P:protoporphyrinogen IX biosynthetic process"/>
    <property type="evidence" value="ECO:0007669"/>
    <property type="project" value="UniProtKB-UniRule"/>
</dbReference>
<dbReference type="FunFam" id="3.40.190.10:FF:000005">
    <property type="entry name" value="Porphobilinogen deaminase"/>
    <property type="match status" value="1"/>
</dbReference>
<dbReference type="Gene3D" id="3.40.190.10">
    <property type="entry name" value="Periplasmic binding protein-like II"/>
    <property type="match status" value="2"/>
</dbReference>
<dbReference type="Gene3D" id="3.30.160.40">
    <property type="entry name" value="Porphobilinogen deaminase, C-terminal domain"/>
    <property type="match status" value="1"/>
</dbReference>
<dbReference type="HAMAP" id="MF_00260">
    <property type="entry name" value="Porphobil_deam"/>
    <property type="match status" value="1"/>
</dbReference>
<dbReference type="InterPro" id="IPR000860">
    <property type="entry name" value="HemC"/>
</dbReference>
<dbReference type="InterPro" id="IPR022417">
    <property type="entry name" value="Porphobilin_deaminase_N"/>
</dbReference>
<dbReference type="InterPro" id="IPR022418">
    <property type="entry name" value="Porphobilinogen_deaminase_C"/>
</dbReference>
<dbReference type="InterPro" id="IPR036803">
    <property type="entry name" value="Porphobilinogen_deaminase_C_sf"/>
</dbReference>
<dbReference type="NCBIfam" id="TIGR00212">
    <property type="entry name" value="hemC"/>
    <property type="match status" value="1"/>
</dbReference>
<dbReference type="PANTHER" id="PTHR11557">
    <property type="entry name" value="PORPHOBILINOGEN DEAMINASE"/>
    <property type="match status" value="1"/>
</dbReference>
<dbReference type="PANTHER" id="PTHR11557:SF0">
    <property type="entry name" value="PORPHOBILINOGEN DEAMINASE"/>
    <property type="match status" value="1"/>
</dbReference>
<dbReference type="Pfam" id="PF01379">
    <property type="entry name" value="Porphobil_deam"/>
    <property type="match status" value="1"/>
</dbReference>
<dbReference type="Pfam" id="PF03900">
    <property type="entry name" value="Porphobil_deamC"/>
    <property type="match status" value="1"/>
</dbReference>
<dbReference type="PIRSF" id="PIRSF001438">
    <property type="entry name" value="4pyrrol_synth_OHMeBilane_synth"/>
    <property type="match status" value="1"/>
</dbReference>
<dbReference type="PRINTS" id="PR00151">
    <property type="entry name" value="PORPHBDMNASE"/>
</dbReference>
<dbReference type="SUPFAM" id="SSF53850">
    <property type="entry name" value="Periplasmic binding protein-like II"/>
    <property type="match status" value="1"/>
</dbReference>
<dbReference type="SUPFAM" id="SSF54782">
    <property type="entry name" value="Porphobilinogen deaminase (hydroxymethylbilane synthase), C-terminal domain"/>
    <property type="match status" value="1"/>
</dbReference>
<comment type="function">
    <text evidence="1">Tetrapolymerization of the monopyrrole PBG into the hydroxymethylbilane pre-uroporphyrinogen in several discrete steps.</text>
</comment>
<comment type="catalytic activity">
    <reaction evidence="1">
        <text>4 porphobilinogen + H2O = hydroxymethylbilane + 4 NH4(+)</text>
        <dbReference type="Rhea" id="RHEA:13185"/>
        <dbReference type="ChEBI" id="CHEBI:15377"/>
        <dbReference type="ChEBI" id="CHEBI:28938"/>
        <dbReference type="ChEBI" id="CHEBI:57845"/>
        <dbReference type="ChEBI" id="CHEBI:58126"/>
        <dbReference type="EC" id="2.5.1.61"/>
    </reaction>
</comment>
<comment type="cofactor">
    <cofactor evidence="1">
        <name>dipyrromethane</name>
        <dbReference type="ChEBI" id="CHEBI:60342"/>
    </cofactor>
    <text evidence="1">Binds 1 dipyrromethane group covalently.</text>
</comment>
<comment type="pathway">
    <text evidence="1">Porphyrin-containing compound metabolism; protoporphyrin-IX biosynthesis; coproporphyrinogen-III from 5-aminolevulinate: step 2/4.</text>
</comment>
<comment type="subunit">
    <text evidence="1">Monomer.</text>
</comment>
<comment type="miscellaneous">
    <text evidence="1">The porphobilinogen subunits are added to the dipyrromethane group.</text>
</comment>
<comment type="similarity">
    <text evidence="1">Belongs to the HMBS family.</text>
</comment>
<protein>
    <recommendedName>
        <fullName evidence="1">Porphobilinogen deaminase</fullName>
        <shortName evidence="1">PBG</shortName>
        <ecNumber evidence="1">2.5.1.61</ecNumber>
    </recommendedName>
    <alternativeName>
        <fullName evidence="1">Hydroxymethylbilane synthase</fullName>
        <shortName evidence="1">HMBS</shortName>
    </alternativeName>
    <alternativeName>
        <fullName evidence="1">Pre-uroporphyrinogen synthase</fullName>
    </alternativeName>
</protein>
<name>HEM3_CYTH3</name>
<accession>Q11XT5</accession>
<organism>
    <name type="scientific">Cytophaga hutchinsonii (strain ATCC 33406 / DSM 1761 / CIP 103989 / NBRC 15051 / NCIMB 9469 / D465)</name>
    <dbReference type="NCBI Taxonomy" id="269798"/>
    <lineage>
        <taxon>Bacteria</taxon>
        <taxon>Pseudomonadati</taxon>
        <taxon>Bacteroidota</taxon>
        <taxon>Cytophagia</taxon>
        <taxon>Cytophagales</taxon>
        <taxon>Cytophagaceae</taxon>
        <taxon>Cytophaga</taxon>
    </lineage>
</organism>
<feature type="chain" id="PRO_0000304231" description="Porphobilinogen deaminase">
    <location>
        <begin position="1"/>
        <end position="312"/>
    </location>
</feature>
<feature type="modified residue" description="S-(dipyrrolylmethanemethyl)cysteine" evidence="1">
    <location>
        <position position="241"/>
    </location>
</feature>
<sequence>MNKTVRIGTRGSKLALWQAEHVAACLQTKGLEPQIVIIDTTGDKILDQSLSKIGSKGLFTEELEEQLHAGTIDIAVHSAKDLQTHLKGGMYILAITERELVNDVLVSHKPIDTLKNNPDLIIGTSSTRRRALLRKFYPQAKMVDMRGNLQTRIRKMEEGACDAMLLAYAGMHRMGYDSLIKEKLSLEEFIPAAGQGTLAIEAASTLDKEKAAVIRAVLNDAATETAVSAERAFLRTLEGGCSIPVFALAVERDTDYLLTGGIVSLDGTKYLRKEIRFTAADAEQRGVELATVLLKDGADEILAEIKKGLSKS</sequence>
<gene>
    <name evidence="1" type="primary">hemC</name>
    <name type="ordered locus">CHU_0492</name>
</gene>